<keyword id="KW-0067">ATP-binding</keyword>
<keyword id="KW-0963">Cytoplasm</keyword>
<keyword id="KW-0227">DNA damage</keyword>
<keyword id="KW-0228">DNA excision</keyword>
<keyword id="KW-0234">DNA repair</keyword>
<keyword id="KW-0267">Excision nuclease</keyword>
<keyword id="KW-0547">Nucleotide-binding</keyword>
<keyword id="KW-0742">SOS response</keyword>
<gene>
    <name evidence="1" type="primary">uvrB</name>
    <name type="ordered locus">BB2273</name>
</gene>
<name>UVRB_BORBR</name>
<accession>Q7WK66</accession>
<sequence>MTAPGFVEFPDSPFHLYQPYPPAGDQPGAIDALTEGVSDGLMFQTLLGVTGSGKTYTMANMIARLGRPALVLAPNKTLAAQLYAEMREFFPRNAVEYFVSYYDYYQPEAYVPTRDLFIEKDSSINEHIEQMRLSATKSLLERRDTVIVGTVSCIYGIGNPGDYHAMVLILRTGDRISRREVLARLVAMQYTRNDADFTRGVFRVRGETIDIFPAESPELALRLTLFDDEIESLELFDPLTGRVRQKLPRFTVYPGSHYVTPRETVLRAIETIKEELRERLAQLIADGKLVEAQRLEQRTRFDLEMLQELGFCKGIENYSRHLSGAAPGEPPPTLIDYLPADALMFIDESHVTIGQLGGMYRGDRSRKETLVQYGFRLPSALDNRPLRLEEFEARMRQCVFVSATPAAYEQEHADNVVEQVVRPTGLVDPIVEVRPAHTQVDDLLGEIHKRAALQERVLVTTLTKRMAEDLTDFLSEHGVRVRYLHSDIDTVERVEIIRDLRLGVFDVLVGINLLREGLDIPEVSLVAILDADKEGFLRSERSLIQTIGRAARNLNGRAILYADRITDSMRRAIDETERRRAKQIQHNTDHGITARGVSKAVRELIDGVVAPAGHDALESAVPAEVLTDEKAMAREIRRLEKLMMDHARNLEFEQAAAARDALNALKSRLLLDGVG</sequence>
<feature type="chain" id="PRO_0000227290" description="UvrABC system protein B">
    <location>
        <begin position="1"/>
        <end position="675"/>
    </location>
</feature>
<feature type="domain" description="Helicase ATP-binding" evidence="1">
    <location>
        <begin position="35"/>
        <end position="422"/>
    </location>
</feature>
<feature type="domain" description="Helicase C-terminal" evidence="1">
    <location>
        <begin position="439"/>
        <end position="605"/>
    </location>
</feature>
<feature type="domain" description="UVR" evidence="1">
    <location>
        <begin position="633"/>
        <end position="668"/>
    </location>
</feature>
<feature type="short sequence motif" description="Beta-hairpin">
    <location>
        <begin position="101"/>
        <end position="124"/>
    </location>
</feature>
<feature type="binding site" evidence="1">
    <location>
        <begin position="48"/>
        <end position="55"/>
    </location>
    <ligand>
        <name>ATP</name>
        <dbReference type="ChEBI" id="CHEBI:30616"/>
    </ligand>
</feature>
<organism>
    <name type="scientific">Bordetella bronchiseptica (strain ATCC BAA-588 / NCTC 13252 / RB50)</name>
    <name type="common">Alcaligenes bronchisepticus</name>
    <dbReference type="NCBI Taxonomy" id="257310"/>
    <lineage>
        <taxon>Bacteria</taxon>
        <taxon>Pseudomonadati</taxon>
        <taxon>Pseudomonadota</taxon>
        <taxon>Betaproteobacteria</taxon>
        <taxon>Burkholderiales</taxon>
        <taxon>Alcaligenaceae</taxon>
        <taxon>Bordetella</taxon>
    </lineage>
</organism>
<dbReference type="EMBL" id="BX640443">
    <property type="protein sequence ID" value="CAE32769.1"/>
    <property type="molecule type" value="Genomic_DNA"/>
</dbReference>
<dbReference type="RefSeq" id="WP_003812466.1">
    <property type="nucleotide sequence ID" value="NC_002927.3"/>
</dbReference>
<dbReference type="SMR" id="Q7WK66"/>
<dbReference type="GeneID" id="56478388"/>
<dbReference type="KEGG" id="bbr:BB2273"/>
<dbReference type="eggNOG" id="COG0556">
    <property type="taxonomic scope" value="Bacteria"/>
</dbReference>
<dbReference type="HOGENOM" id="CLU_009621_2_1_4"/>
<dbReference type="Proteomes" id="UP000001027">
    <property type="component" value="Chromosome"/>
</dbReference>
<dbReference type="GO" id="GO:0005737">
    <property type="term" value="C:cytoplasm"/>
    <property type="evidence" value="ECO:0007669"/>
    <property type="project" value="UniProtKB-SubCell"/>
</dbReference>
<dbReference type="GO" id="GO:0009380">
    <property type="term" value="C:excinuclease repair complex"/>
    <property type="evidence" value="ECO:0007669"/>
    <property type="project" value="InterPro"/>
</dbReference>
<dbReference type="GO" id="GO:0005524">
    <property type="term" value="F:ATP binding"/>
    <property type="evidence" value="ECO:0007669"/>
    <property type="project" value="UniProtKB-UniRule"/>
</dbReference>
<dbReference type="GO" id="GO:0016887">
    <property type="term" value="F:ATP hydrolysis activity"/>
    <property type="evidence" value="ECO:0007669"/>
    <property type="project" value="InterPro"/>
</dbReference>
<dbReference type="GO" id="GO:0003677">
    <property type="term" value="F:DNA binding"/>
    <property type="evidence" value="ECO:0007669"/>
    <property type="project" value="UniProtKB-UniRule"/>
</dbReference>
<dbReference type="GO" id="GO:0009381">
    <property type="term" value="F:excinuclease ABC activity"/>
    <property type="evidence" value="ECO:0007669"/>
    <property type="project" value="UniProtKB-UniRule"/>
</dbReference>
<dbReference type="GO" id="GO:0006289">
    <property type="term" value="P:nucleotide-excision repair"/>
    <property type="evidence" value="ECO:0007669"/>
    <property type="project" value="UniProtKB-UniRule"/>
</dbReference>
<dbReference type="GO" id="GO:0009432">
    <property type="term" value="P:SOS response"/>
    <property type="evidence" value="ECO:0007669"/>
    <property type="project" value="UniProtKB-UniRule"/>
</dbReference>
<dbReference type="CDD" id="cd17916">
    <property type="entry name" value="DEXHc_UvrB"/>
    <property type="match status" value="1"/>
</dbReference>
<dbReference type="CDD" id="cd18790">
    <property type="entry name" value="SF2_C_UvrB"/>
    <property type="match status" value="1"/>
</dbReference>
<dbReference type="FunFam" id="3.40.50.300:FF:000477">
    <property type="entry name" value="UvrABC system protein B"/>
    <property type="match status" value="1"/>
</dbReference>
<dbReference type="Gene3D" id="6.10.140.240">
    <property type="match status" value="1"/>
</dbReference>
<dbReference type="Gene3D" id="3.40.50.300">
    <property type="entry name" value="P-loop containing nucleotide triphosphate hydrolases"/>
    <property type="match status" value="3"/>
</dbReference>
<dbReference type="Gene3D" id="4.10.860.10">
    <property type="entry name" value="UVR domain"/>
    <property type="match status" value="1"/>
</dbReference>
<dbReference type="HAMAP" id="MF_00204">
    <property type="entry name" value="UvrB"/>
    <property type="match status" value="1"/>
</dbReference>
<dbReference type="InterPro" id="IPR006935">
    <property type="entry name" value="Helicase/UvrB_N"/>
</dbReference>
<dbReference type="InterPro" id="IPR014001">
    <property type="entry name" value="Helicase_ATP-bd"/>
</dbReference>
<dbReference type="InterPro" id="IPR001650">
    <property type="entry name" value="Helicase_C-like"/>
</dbReference>
<dbReference type="InterPro" id="IPR027417">
    <property type="entry name" value="P-loop_NTPase"/>
</dbReference>
<dbReference type="InterPro" id="IPR001943">
    <property type="entry name" value="UVR_dom"/>
</dbReference>
<dbReference type="InterPro" id="IPR036876">
    <property type="entry name" value="UVR_dom_sf"/>
</dbReference>
<dbReference type="InterPro" id="IPR004807">
    <property type="entry name" value="UvrB"/>
</dbReference>
<dbReference type="InterPro" id="IPR041471">
    <property type="entry name" value="UvrB_inter"/>
</dbReference>
<dbReference type="InterPro" id="IPR024759">
    <property type="entry name" value="UvrB_YAD/RRR_dom"/>
</dbReference>
<dbReference type="NCBIfam" id="NF003673">
    <property type="entry name" value="PRK05298.1"/>
    <property type="match status" value="1"/>
</dbReference>
<dbReference type="NCBIfam" id="TIGR00631">
    <property type="entry name" value="uvrb"/>
    <property type="match status" value="1"/>
</dbReference>
<dbReference type="PANTHER" id="PTHR24029">
    <property type="entry name" value="UVRABC SYSTEM PROTEIN B"/>
    <property type="match status" value="1"/>
</dbReference>
<dbReference type="PANTHER" id="PTHR24029:SF0">
    <property type="entry name" value="UVRABC SYSTEM PROTEIN B"/>
    <property type="match status" value="1"/>
</dbReference>
<dbReference type="Pfam" id="PF00271">
    <property type="entry name" value="Helicase_C"/>
    <property type="match status" value="1"/>
</dbReference>
<dbReference type="Pfam" id="PF04851">
    <property type="entry name" value="ResIII"/>
    <property type="match status" value="1"/>
</dbReference>
<dbReference type="Pfam" id="PF02151">
    <property type="entry name" value="UVR"/>
    <property type="match status" value="1"/>
</dbReference>
<dbReference type="Pfam" id="PF12344">
    <property type="entry name" value="UvrB"/>
    <property type="match status" value="1"/>
</dbReference>
<dbReference type="Pfam" id="PF17757">
    <property type="entry name" value="UvrB_inter"/>
    <property type="match status" value="1"/>
</dbReference>
<dbReference type="SMART" id="SM00487">
    <property type="entry name" value="DEXDc"/>
    <property type="match status" value="1"/>
</dbReference>
<dbReference type="SMART" id="SM00490">
    <property type="entry name" value="HELICc"/>
    <property type="match status" value="1"/>
</dbReference>
<dbReference type="SUPFAM" id="SSF46600">
    <property type="entry name" value="C-terminal UvrC-binding domain of UvrB"/>
    <property type="match status" value="1"/>
</dbReference>
<dbReference type="SUPFAM" id="SSF52540">
    <property type="entry name" value="P-loop containing nucleoside triphosphate hydrolases"/>
    <property type="match status" value="2"/>
</dbReference>
<dbReference type="PROSITE" id="PS51192">
    <property type="entry name" value="HELICASE_ATP_BIND_1"/>
    <property type="match status" value="1"/>
</dbReference>
<dbReference type="PROSITE" id="PS51194">
    <property type="entry name" value="HELICASE_CTER"/>
    <property type="match status" value="1"/>
</dbReference>
<dbReference type="PROSITE" id="PS50151">
    <property type="entry name" value="UVR"/>
    <property type="match status" value="1"/>
</dbReference>
<protein>
    <recommendedName>
        <fullName evidence="1">UvrABC system protein B</fullName>
        <shortName evidence="1">Protein UvrB</shortName>
    </recommendedName>
    <alternativeName>
        <fullName evidence="1">Excinuclease ABC subunit B</fullName>
    </alternativeName>
</protein>
<evidence type="ECO:0000255" key="1">
    <source>
        <dbReference type="HAMAP-Rule" id="MF_00204"/>
    </source>
</evidence>
<reference key="1">
    <citation type="journal article" date="2003" name="Nat. Genet.">
        <title>Comparative analysis of the genome sequences of Bordetella pertussis, Bordetella parapertussis and Bordetella bronchiseptica.</title>
        <authorList>
            <person name="Parkhill J."/>
            <person name="Sebaihia M."/>
            <person name="Preston A."/>
            <person name="Murphy L.D."/>
            <person name="Thomson N.R."/>
            <person name="Harris D.E."/>
            <person name="Holden M.T.G."/>
            <person name="Churcher C.M."/>
            <person name="Bentley S.D."/>
            <person name="Mungall K.L."/>
            <person name="Cerdeno-Tarraga A.-M."/>
            <person name="Temple L."/>
            <person name="James K.D."/>
            <person name="Harris B."/>
            <person name="Quail M.A."/>
            <person name="Achtman M."/>
            <person name="Atkin R."/>
            <person name="Baker S."/>
            <person name="Basham D."/>
            <person name="Bason N."/>
            <person name="Cherevach I."/>
            <person name="Chillingworth T."/>
            <person name="Collins M."/>
            <person name="Cronin A."/>
            <person name="Davis P."/>
            <person name="Doggett J."/>
            <person name="Feltwell T."/>
            <person name="Goble A."/>
            <person name="Hamlin N."/>
            <person name="Hauser H."/>
            <person name="Holroyd S."/>
            <person name="Jagels K."/>
            <person name="Leather S."/>
            <person name="Moule S."/>
            <person name="Norberczak H."/>
            <person name="O'Neil S."/>
            <person name="Ormond D."/>
            <person name="Price C."/>
            <person name="Rabbinowitsch E."/>
            <person name="Rutter S."/>
            <person name="Sanders M."/>
            <person name="Saunders D."/>
            <person name="Seeger K."/>
            <person name="Sharp S."/>
            <person name="Simmonds M."/>
            <person name="Skelton J."/>
            <person name="Squares R."/>
            <person name="Squares S."/>
            <person name="Stevens K."/>
            <person name="Unwin L."/>
            <person name="Whitehead S."/>
            <person name="Barrell B.G."/>
            <person name="Maskell D.J."/>
        </authorList>
    </citation>
    <scope>NUCLEOTIDE SEQUENCE [LARGE SCALE GENOMIC DNA]</scope>
    <source>
        <strain>ATCC BAA-588 / NCTC 13252 / RB50</strain>
    </source>
</reference>
<proteinExistence type="inferred from homology"/>
<comment type="function">
    <text evidence="1">The UvrABC repair system catalyzes the recognition and processing of DNA lesions. A damage recognition complex composed of 2 UvrA and 2 UvrB subunits scans DNA for abnormalities. Upon binding of the UvrA(2)B(2) complex to a putative damaged site, the DNA wraps around one UvrB monomer. DNA wrap is dependent on ATP binding by UvrB and probably causes local melting of the DNA helix, facilitating insertion of UvrB beta-hairpin between the DNA strands. Then UvrB probes one DNA strand for the presence of a lesion. If a lesion is found the UvrA subunits dissociate and the UvrB-DNA preincision complex is formed. This complex is subsequently bound by UvrC and the second UvrB is released. If no lesion is found, the DNA wraps around the other UvrB subunit that will check the other stand for damage.</text>
</comment>
<comment type="subunit">
    <text evidence="1">Forms a heterotetramer with UvrA during the search for lesions. Interacts with UvrC in an incision complex.</text>
</comment>
<comment type="subcellular location">
    <subcellularLocation>
        <location evidence="1">Cytoplasm</location>
    </subcellularLocation>
</comment>
<comment type="domain">
    <text evidence="1">The beta-hairpin motif is involved in DNA binding.</text>
</comment>
<comment type="similarity">
    <text evidence="1">Belongs to the UvrB family.</text>
</comment>